<keyword id="KW-0378">Hydrolase</keyword>
<keyword id="KW-0479">Metal-binding</keyword>
<keyword id="KW-0507">mRNA processing</keyword>
<keyword id="KW-0540">Nuclease</keyword>
<keyword id="KW-0547">Nucleotide-binding</keyword>
<keyword id="KW-0539">Nucleus</keyword>
<keyword id="KW-0694">RNA-binding</keyword>
<protein>
    <recommendedName>
        <fullName evidence="6">Decapping nuclease RAI1</fullName>
        <ecNumber evidence="5">3.6.1.-</ecNumber>
    </recommendedName>
    <alternativeName>
        <fullName evidence="6">NAD-capped RNA hydrolase RAI1</fullName>
        <shortName evidence="6">DeNADding enzyme RAI1</shortName>
        <ecNumber evidence="1">3.6.1.-</ecNumber>
    </alternativeName>
</protein>
<feature type="chain" id="PRO_0000410060" description="Decapping nuclease RAI1">
    <location>
        <begin position="1"/>
        <end position="386"/>
    </location>
</feature>
<feature type="binding site" evidence="2">
    <location>
        <position position="34"/>
    </location>
    <ligand>
        <name>substrate</name>
    </ligand>
</feature>
<feature type="binding site" evidence="1">
    <location>
        <position position="159"/>
    </location>
    <ligand>
        <name>a divalent metal cation</name>
        <dbReference type="ChEBI" id="CHEBI:60240"/>
    </ligand>
</feature>
<feature type="binding site" evidence="2">
    <location>
        <position position="205"/>
    </location>
    <ligand>
        <name>substrate</name>
    </ligand>
</feature>
<feature type="binding site" evidence="1">
    <location>
        <position position="207"/>
    </location>
    <ligand>
        <name>a divalent metal cation</name>
        <dbReference type="ChEBI" id="CHEBI:60240"/>
    </ligand>
</feature>
<feature type="binding site" evidence="1">
    <location>
        <position position="225"/>
    </location>
    <ligand>
        <name>a divalent metal cation</name>
        <dbReference type="ChEBI" id="CHEBI:60240"/>
    </ligand>
</feature>
<feature type="binding site" evidence="1">
    <location>
        <position position="226"/>
    </location>
    <ligand>
        <name>a divalent metal cation</name>
        <dbReference type="ChEBI" id="CHEBI:60240"/>
    </ligand>
</feature>
<feature type="binding site" evidence="2">
    <location>
        <position position="227"/>
    </location>
    <ligand>
        <name>substrate</name>
    </ligand>
</feature>
<feature type="binding site" evidence="2">
    <location>
        <position position="251"/>
    </location>
    <ligand>
        <name>substrate</name>
    </ligand>
</feature>
<gene>
    <name type="primary">RAI1</name>
    <name type="ordered locus">CNBF3130</name>
</gene>
<accession>P0CN13</accession>
<accession>Q55QM5</accession>
<accession>Q5KFJ0</accession>
<dbReference type="EC" id="3.6.1.-" evidence="5 1"/>
<dbReference type="EMBL" id="AAEY01000032">
    <property type="protein sequence ID" value="EAL19986.1"/>
    <property type="molecule type" value="Genomic_DNA"/>
</dbReference>
<dbReference type="RefSeq" id="XP_774633.1">
    <property type="nucleotide sequence ID" value="XM_769540.1"/>
</dbReference>
<dbReference type="SMR" id="P0CN13"/>
<dbReference type="GeneID" id="4936865"/>
<dbReference type="KEGG" id="cnb:CNBF3130"/>
<dbReference type="VEuPathDB" id="FungiDB:CNBF3130"/>
<dbReference type="HOGENOM" id="CLU_024877_4_1_1"/>
<dbReference type="OrthoDB" id="4020at5206"/>
<dbReference type="GO" id="GO:0005829">
    <property type="term" value="C:cytosol"/>
    <property type="evidence" value="ECO:0007669"/>
    <property type="project" value="TreeGrafter"/>
</dbReference>
<dbReference type="GO" id="GO:0005634">
    <property type="term" value="C:nucleus"/>
    <property type="evidence" value="ECO:0007669"/>
    <property type="project" value="UniProtKB-SubCell"/>
</dbReference>
<dbReference type="GO" id="GO:0046872">
    <property type="term" value="F:metal ion binding"/>
    <property type="evidence" value="ECO:0007669"/>
    <property type="project" value="UniProtKB-KW"/>
</dbReference>
<dbReference type="GO" id="GO:0034353">
    <property type="term" value="F:mRNA 5'-diphosphatase activity"/>
    <property type="evidence" value="ECO:0007669"/>
    <property type="project" value="TreeGrafter"/>
</dbReference>
<dbReference type="GO" id="GO:0004518">
    <property type="term" value="F:nuclease activity"/>
    <property type="evidence" value="ECO:0007669"/>
    <property type="project" value="UniProtKB-KW"/>
</dbReference>
<dbReference type="GO" id="GO:0000166">
    <property type="term" value="F:nucleotide binding"/>
    <property type="evidence" value="ECO:0007669"/>
    <property type="project" value="UniProtKB-KW"/>
</dbReference>
<dbReference type="GO" id="GO:0003723">
    <property type="term" value="F:RNA binding"/>
    <property type="evidence" value="ECO:0007669"/>
    <property type="project" value="UniProtKB-KW"/>
</dbReference>
<dbReference type="GO" id="GO:0110152">
    <property type="term" value="F:RNA NAD+-cap (NAD+-forming) hydrolase activity"/>
    <property type="evidence" value="ECO:0007669"/>
    <property type="project" value="RHEA"/>
</dbReference>
<dbReference type="GO" id="GO:0006397">
    <property type="term" value="P:mRNA processing"/>
    <property type="evidence" value="ECO:0007669"/>
    <property type="project" value="UniProtKB-KW"/>
</dbReference>
<dbReference type="GO" id="GO:0110155">
    <property type="term" value="P:NAD-cap decapping"/>
    <property type="evidence" value="ECO:0007669"/>
    <property type="project" value="TreeGrafter"/>
</dbReference>
<dbReference type="GO" id="GO:0000956">
    <property type="term" value="P:nuclear-transcribed mRNA catabolic process"/>
    <property type="evidence" value="ECO:0007669"/>
    <property type="project" value="TreeGrafter"/>
</dbReference>
<dbReference type="InterPro" id="IPR013961">
    <property type="entry name" value="RAI1"/>
</dbReference>
<dbReference type="InterPro" id="IPR039039">
    <property type="entry name" value="RAI1-like_fam"/>
</dbReference>
<dbReference type="PANTHER" id="PTHR12395:SF9">
    <property type="entry name" value="DECAPPING AND EXORIBONUCLEASE PROTEIN"/>
    <property type="match status" value="1"/>
</dbReference>
<dbReference type="PANTHER" id="PTHR12395">
    <property type="entry name" value="DOM-3 RELATED"/>
    <property type="match status" value="1"/>
</dbReference>
<dbReference type="Pfam" id="PF08652">
    <property type="entry name" value="RAI1"/>
    <property type="match status" value="1"/>
</dbReference>
<name>DXO_CRYNB</name>
<evidence type="ECO:0000250" key="1">
    <source>
        <dbReference type="UniProtKB" id="O13836"/>
    </source>
</evidence>
<evidence type="ECO:0000250" key="2">
    <source>
        <dbReference type="UniProtKB" id="O70348"/>
    </source>
</evidence>
<evidence type="ECO:0000250" key="3">
    <source>
        <dbReference type="UniProtKB" id="P53063"/>
    </source>
</evidence>
<evidence type="ECO:0000250" key="4">
    <source>
        <dbReference type="UniProtKB" id="Q06349"/>
    </source>
</evidence>
<evidence type="ECO:0000250" key="5">
    <source>
        <dbReference type="UniProtKB" id="Q5AAT0"/>
    </source>
</evidence>
<evidence type="ECO:0000305" key="6"/>
<reference key="1">
    <citation type="journal article" date="2005" name="Science">
        <title>The genome of the basidiomycetous yeast and human pathogen Cryptococcus neoformans.</title>
        <authorList>
            <person name="Loftus B.J."/>
            <person name="Fung E."/>
            <person name="Roncaglia P."/>
            <person name="Rowley D."/>
            <person name="Amedeo P."/>
            <person name="Bruno D."/>
            <person name="Vamathevan J."/>
            <person name="Miranda M."/>
            <person name="Anderson I.J."/>
            <person name="Fraser J.A."/>
            <person name="Allen J.E."/>
            <person name="Bosdet I.E."/>
            <person name="Brent M.R."/>
            <person name="Chiu R."/>
            <person name="Doering T.L."/>
            <person name="Donlin M.J."/>
            <person name="D'Souza C.A."/>
            <person name="Fox D.S."/>
            <person name="Grinberg V."/>
            <person name="Fu J."/>
            <person name="Fukushima M."/>
            <person name="Haas B.J."/>
            <person name="Huang J.C."/>
            <person name="Janbon G."/>
            <person name="Jones S.J.M."/>
            <person name="Koo H.L."/>
            <person name="Krzywinski M.I."/>
            <person name="Kwon-Chung K.J."/>
            <person name="Lengeler K.B."/>
            <person name="Maiti R."/>
            <person name="Marra M.A."/>
            <person name="Marra R.E."/>
            <person name="Mathewson C.A."/>
            <person name="Mitchell T.G."/>
            <person name="Pertea M."/>
            <person name="Riggs F.R."/>
            <person name="Salzberg S.L."/>
            <person name="Schein J.E."/>
            <person name="Shvartsbeyn A."/>
            <person name="Shin H."/>
            <person name="Shumway M."/>
            <person name="Specht C.A."/>
            <person name="Suh B.B."/>
            <person name="Tenney A."/>
            <person name="Utterback T.R."/>
            <person name="Wickes B.L."/>
            <person name="Wortman J.R."/>
            <person name="Wye N.H."/>
            <person name="Kronstad J.W."/>
            <person name="Lodge J.K."/>
            <person name="Heitman J."/>
            <person name="Davis R.W."/>
            <person name="Fraser C.M."/>
            <person name="Hyman R.W."/>
        </authorList>
    </citation>
    <scope>NUCLEOTIDE SEQUENCE [LARGE SCALE GENOMIC DNA]</scope>
    <source>
        <strain>B-3501A</strain>
    </source>
</reference>
<comment type="function">
    <text evidence="1 2 4 5">Decapping enzyme for NAD-capped RNAs: specifically hydrolyzes the nicotinamide adenine dinucleotide (NAD) cap from a subset of RNAs by removing the entire NAD moiety from the 5'-end of an NAD-capped RNA (By similarity). The NAD-cap is present at the 5'-end of some RNAs and snoRNAs. In contrast to the canonical 5'-end N7 methylguanosine (m7G) cap, the NAD cap promotes mRNA decay (By similarity). Also acts as a non-canonical decapping enzyme that removes the entire cap structure of m7G capped or incompletely capped RNAs (By similarity). Has decapping activity toward incomplete 5'-end m7G cap mRNAs such as unmethylated 5'-end-capped RNA (cap0), while it has no activity toward 2'-O-ribose methylated m7G cap (cap1) (By similarity). Also possesses RNA 5'-pyrophosphohydrolase activity by hydrolyzing the 5'-end triphosphate to release pyrophosphates (By similarity). Stimulates exoribonuclease activity of Rat1, allowing it to degrade RNAs with stable secondary structure more effectively (By similarity).</text>
</comment>
<comment type="catalytic activity">
    <reaction evidence="1">
        <text>a 5'-end NAD(+)-phospho-ribonucleoside in mRNA + H2O = a 5'-end phospho-ribonucleoside in mRNA + NAD(+) + H(+)</text>
        <dbReference type="Rhea" id="RHEA:60880"/>
        <dbReference type="Rhea" id="RHEA-COMP:15692"/>
        <dbReference type="Rhea" id="RHEA-COMP:15698"/>
        <dbReference type="ChEBI" id="CHEBI:15377"/>
        <dbReference type="ChEBI" id="CHEBI:15378"/>
        <dbReference type="ChEBI" id="CHEBI:57540"/>
        <dbReference type="ChEBI" id="CHEBI:138282"/>
        <dbReference type="ChEBI" id="CHEBI:144029"/>
    </reaction>
    <physiologicalReaction direction="left-to-right" evidence="1">
        <dbReference type="Rhea" id="RHEA:60881"/>
    </physiologicalReaction>
</comment>
<comment type="catalytic activity">
    <reaction evidence="3">
        <text>a 5'-end (N(7)-methyl 5'-triphosphoguanosine)-ribonucleoside-ribonucleotide in mRNA + H2O = a (N(7)-methyl 5'-triphosphoguanosine)-nucleoside + a 5'-end phospho-ribonucleoside in mRNA + H(+)</text>
        <dbReference type="Rhea" id="RHEA:66928"/>
        <dbReference type="Rhea" id="RHEA-COMP:15692"/>
        <dbReference type="Rhea" id="RHEA-COMP:17313"/>
        <dbReference type="ChEBI" id="CHEBI:15377"/>
        <dbReference type="ChEBI" id="CHEBI:15378"/>
        <dbReference type="ChEBI" id="CHEBI:138282"/>
        <dbReference type="ChEBI" id="CHEBI:172876"/>
        <dbReference type="ChEBI" id="CHEBI:172877"/>
    </reaction>
    <physiologicalReaction direction="left-to-right" evidence="3">
        <dbReference type="Rhea" id="RHEA:66929"/>
    </physiologicalReaction>
</comment>
<comment type="catalytic activity">
    <reaction evidence="1">
        <text>a 5'-end triphospho-ribonucleoside in mRNA + H2O = a 5'-end phospho-ribonucleoside in mRNA + diphosphate + H(+)</text>
        <dbReference type="Rhea" id="RHEA:78683"/>
        <dbReference type="Rhea" id="RHEA-COMP:15692"/>
        <dbReference type="Rhea" id="RHEA-COMP:17164"/>
        <dbReference type="ChEBI" id="CHEBI:15377"/>
        <dbReference type="ChEBI" id="CHEBI:15378"/>
        <dbReference type="ChEBI" id="CHEBI:33019"/>
        <dbReference type="ChEBI" id="CHEBI:138282"/>
        <dbReference type="ChEBI" id="CHEBI:167618"/>
    </reaction>
    <physiologicalReaction direction="left-to-right" evidence="1">
        <dbReference type="Rhea" id="RHEA:78684"/>
    </physiologicalReaction>
</comment>
<comment type="cofactor">
    <cofactor evidence="5">
        <name>a divalent metal cation</name>
        <dbReference type="ChEBI" id="CHEBI:60240"/>
    </cofactor>
    <text evidence="5">Divalent metal cation.</text>
</comment>
<comment type="subunit">
    <text evidence="1">Interacts with RAT1; the interaction is direct, stabilizes RAT1 protein structure and stimulates its exoribonuclease activity (By similarity). The interaction also stimulates RAI1 pyrophosphohydrolase activity, probably by recruiting it to mRNA substrates (By similarity).</text>
</comment>
<comment type="subcellular location">
    <subcellularLocation>
        <location evidence="3">Nucleus</location>
    </subcellularLocation>
</comment>
<comment type="similarity">
    <text evidence="6">Belongs to the DXO/Dom3Z family.</text>
</comment>
<proteinExistence type="inferred from homology"/>
<sequence length="386" mass="43474">MPHSIPLLRPNPADPVPSYRLPHLIHTYSHLPTRAISHDDASMAYYSLAPIGCNLTEGFERRIEREDEEEHLDGLVESLEWLITRGRKGERKGGIITWRGMLTRLITMPYETRDPWEMTAIALDGSVYLELWDPPEEKAKRKREQSAWEKQGYMGYAYESFSTIPQEGRPGNGPEGWGGDVNTNVQWANVVRSAIGEIPLCIAGEVDCVKAEPGSPNPGLSGCMELKTNKVIQHPGHEAMFHKKLLKHWAQSWLLGIPEVVVGFRDDDGILRSQTTFDTAKIPYLVEVLNKPSWSPNRCLQSLHSVCSFLTKNVLPTDPLVTYPHIRGNRQAVKEAGELPPAVVWRLAFDPKKGCELHAVGEVGVVDGRWGGMLKEEYVRWRMGLE</sequence>
<organism>
    <name type="scientific">Cryptococcus neoformans var. neoformans serotype D (strain B-3501A)</name>
    <name type="common">Filobasidiella neoformans</name>
    <dbReference type="NCBI Taxonomy" id="283643"/>
    <lineage>
        <taxon>Eukaryota</taxon>
        <taxon>Fungi</taxon>
        <taxon>Dikarya</taxon>
        <taxon>Basidiomycota</taxon>
        <taxon>Agaricomycotina</taxon>
        <taxon>Tremellomycetes</taxon>
        <taxon>Tremellales</taxon>
        <taxon>Cryptococcaceae</taxon>
        <taxon>Cryptococcus</taxon>
        <taxon>Cryptococcus neoformans species complex</taxon>
    </lineage>
</organism>